<sequence length="188" mass="20845">MKVIASSIRKGNVIEQDGKLYVVVTAENIHPGKGTPVSQIEMRRISDGVKISERYKTTDQVEKVTIEERNYTYLYEDPDGFHFMNPETYDQVLVPKDVVGSQAAYLQENMTVKLSMHDVVPVSIALPQRVTLEVVDTEPVTKGQTASSSYKPAVLSNGVRTGVPPHITVGTRIVVMTEDGSYCERAKD</sequence>
<name>EFP_BRASB</name>
<gene>
    <name evidence="1" type="primary">efp</name>
    <name type="ordered locus">BBta_4012</name>
</gene>
<accession>A5EIT5</accession>
<dbReference type="EMBL" id="CP000494">
    <property type="protein sequence ID" value="ABQ36079.1"/>
    <property type="molecule type" value="Genomic_DNA"/>
</dbReference>
<dbReference type="RefSeq" id="WP_012044083.1">
    <property type="nucleotide sequence ID" value="NC_009485.1"/>
</dbReference>
<dbReference type="SMR" id="A5EIT5"/>
<dbReference type="STRING" id="288000.BBta_4012"/>
<dbReference type="KEGG" id="bbt:BBta_4012"/>
<dbReference type="eggNOG" id="COG0231">
    <property type="taxonomic scope" value="Bacteria"/>
</dbReference>
<dbReference type="HOGENOM" id="CLU_074944_1_1_5"/>
<dbReference type="OrthoDB" id="9801844at2"/>
<dbReference type="UniPathway" id="UPA00345"/>
<dbReference type="Proteomes" id="UP000000246">
    <property type="component" value="Chromosome"/>
</dbReference>
<dbReference type="GO" id="GO:0005737">
    <property type="term" value="C:cytoplasm"/>
    <property type="evidence" value="ECO:0007669"/>
    <property type="project" value="UniProtKB-SubCell"/>
</dbReference>
<dbReference type="GO" id="GO:0003746">
    <property type="term" value="F:translation elongation factor activity"/>
    <property type="evidence" value="ECO:0007669"/>
    <property type="project" value="UniProtKB-UniRule"/>
</dbReference>
<dbReference type="GO" id="GO:0043043">
    <property type="term" value="P:peptide biosynthetic process"/>
    <property type="evidence" value="ECO:0007669"/>
    <property type="project" value="InterPro"/>
</dbReference>
<dbReference type="CDD" id="cd04470">
    <property type="entry name" value="S1_EF-P_repeat_1"/>
    <property type="match status" value="1"/>
</dbReference>
<dbReference type="CDD" id="cd05794">
    <property type="entry name" value="S1_EF-P_repeat_2"/>
    <property type="match status" value="1"/>
</dbReference>
<dbReference type="FunFam" id="2.40.50.140:FF:000004">
    <property type="entry name" value="Elongation factor P"/>
    <property type="match status" value="1"/>
</dbReference>
<dbReference type="FunFam" id="2.40.50.140:FF:000009">
    <property type="entry name" value="Elongation factor P"/>
    <property type="match status" value="1"/>
</dbReference>
<dbReference type="Gene3D" id="2.30.30.30">
    <property type="match status" value="1"/>
</dbReference>
<dbReference type="Gene3D" id="2.40.50.140">
    <property type="entry name" value="Nucleic acid-binding proteins"/>
    <property type="match status" value="2"/>
</dbReference>
<dbReference type="HAMAP" id="MF_00141">
    <property type="entry name" value="EF_P"/>
    <property type="match status" value="1"/>
</dbReference>
<dbReference type="InterPro" id="IPR015365">
    <property type="entry name" value="Elong-fact-P_C"/>
</dbReference>
<dbReference type="InterPro" id="IPR012340">
    <property type="entry name" value="NA-bd_OB-fold"/>
</dbReference>
<dbReference type="InterPro" id="IPR014722">
    <property type="entry name" value="Rib_uL2_dom2"/>
</dbReference>
<dbReference type="InterPro" id="IPR020599">
    <property type="entry name" value="Transl_elong_fac_P/YeiP"/>
</dbReference>
<dbReference type="InterPro" id="IPR013185">
    <property type="entry name" value="Transl_elong_KOW-like"/>
</dbReference>
<dbReference type="InterPro" id="IPR001059">
    <property type="entry name" value="Transl_elong_P/YeiP_cen"/>
</dbReference>
<dbReference type="InterPro" id="IPR013852">
    <property type="entry name" value="Transl_elong_P/YeiP_CS"/>
</dbReference>
<dbReference type="InterPro" id="IPR011768">
    <property type="entry name" value="Transl_elongation_fac_P"/>
</dbReference>
<dbReference type="InterPro" id="IPR008991">
    <property type="entry name" value="Translation_prot_SH3-like_sf"/>
</dbReference>
<dbReference type="NCBIfam" id="TIGR00038">
    <property type="entry name" value="efp"/>
    <property type="match status" value="1"/>
</dbReference>
<dbReference type="NCBIfam" id="NF001810">
    <property type="entry name" value="PRK00529.1"/>
    <property type="match status" value="1"/>
</dbReference>
<dbReference type="PANTHER" id="PTHR30053">
    <property type="entry name" value="ELONGATION FACTOR P"/>
    <property type="match status" value="1"/>
</dbReference>
<dbReference type="PANTHER" id="PTHR30053:SF14">
    <property type="entry name" value="TRANSLATION ELONGATION FACTOR KOW-LIKE DOMAIN-CONTAINING PROTEIN"/>
    <property type="match status" value="1"/>
</dbReference>
<dbReference type="Pfam" id="PF01132">
    <property type="entry name" value="EFP"/>
    <property type="match status" value="1"/>
</dbReference>
<dbReference type="Pfam" id="PF08207">
    <property type="entry name" value="EFP_N"/>
    <property type="match status" value="1"/>
</dbReference>
<dbReference type="Pfam" id="PF09285">
    <property type="entry name" value="Elong-fact-P_C"/>
    <property type="match status" value="1"/>
</dbReference>
<dbReference type="PIRSF" id="PIRSF005901">
    <property type="entry name" value="EF-P"/>
    <property type="match status" value="1"/>
</dbReference>
<dbReference type="SMART" id="SM01185">
    <property type="entry name" value="EFP"/>
    <property type="match status" value="1"/>
</dbReference>
<dbReference type="SMART" id="SM00841">
    <property type="entry name" value="Elong-fact-P_C"/>
    <property type="match status" value="1"/>
</dbReference>
<dbReference type="SUPFAM" id="SSF50249">
    <property type="entry name" value="Nucleic acid-binding proteins"/>
    <property type="match status" value="2"/>
</dbReference>
<dbReference type="SUPFAM" id="SSF50104">
    <property type="entry name" value="Translation proteins SH3-like domain"/>
    <property type="match status" value="1"/>
</dbReference>
<dbReference type="PROSITE" id="PS01275">
    <property type="entry name" value="EFP"/>
    <property type="match status" value="1"/>
</dbReference>
<evidence type="ECO:0000255" key="1">
    <source>
        <dbReference type="HAMAP-Rule" id="MF_00141"/>
    </source>
</evidence>
<reference key="1">
    <citation type="journal article" date="2007" name="Science">
        <title>Legumes symbioses: absence of nod genes in photosynthetic bradyrhizobia.</title>
        <authorList>
            <person name="Giraud E."/>
            <person name="Moulin L."/>
            <person name="Vallenet D."/>
            <person name="Barbe V."/>
            <person name="Cytryn E."/>
            <person name="Avarre J.-C."/>
            <person name="Jaubert M."/>
            <person name="Simon D."/>
            <person name="Cartieaux F."/>
            <person name="Prin Y."/>
            <person name="Bena G."/>
            <person name="Hannibal L."/>
            <person name="Fardoux J."/>
            <person name="Kojadinovic M."/>
            <person name="Vuillet L."/>
            <person name="Lajus A."/>
            <person name="Cruveiller S."/>
            <person name="Rouy Z."/>
            <person name="Mangenot S."/>
            <person name="Segurens B."/>
            <person name="Dossat C."/>
            <person name="Franck W.L."/>
            <person name="Chang W.-S."/>
            <person name="Saunders E."/>
            <person name="Bruce D."/>
            <person name="Richardson P."/>
            <person name="Normand P."/>
            <person name="Dreyfus B."/>
            <person name="Pignol D."/>
            <person name="Stacey G."/>
            <person name="Emerich D."/>
            <person name="Vermeglio A."/>
            <person name="Medigue C."/>
            <person name="Sadowsky M."/>
        </authorList>
    </citation>
    <scope>NUCLEOTIDE SEQUENCE [LARGE SCALE GENOMIC DNA]</scope>
    <source>
        <strain>BTAi1 / ATCC BAA-1182</strain>
    </source>
</reference>
<protein>
    <recommendedName>
        <fullName evidence="1">Elongation factor P</fullName>
        <shortName evidence="1">EF-P</shortName>
    </recommendedName>
</protein>
<keyword id="KW-0963">Cytoplasm</keyword>
<keyword id="KW-0251">Elongation factor</keyword>
<keyword id="KW-0648">Protein biosynthesis</keyword>
<keyword id="KW-1185">Reference proteome</keyword>
<comment type="function">
    <text evidence="1">Involved in peptide bond synthesis. Stimulates efficient translation and peptide-bond synthesis on native or reconstituted 70S ribosomes in vitro. Probably functions indirectly by altering the affinity of the ribosome for aminoacyl-tRNA, thus increasing their reactivity as acceptors for peptidyl transferase.</text>
</comment>
<comment type="pathway">
    <text evidence="1">Protein biosynthesis; polypeptide chain elongation.</text>
</comment>
<comment type="subcellular location">
    <subcellularLocation>
        <location evidence="1">Cytoplasm</location>
    </subcellularLocation>
</comment>
<comment type="similarity">
    <text evidence="1">Belongs to the elongation factor P family.</text>
</comment>
<proteinExistence type="inferred from homology"/>
<organism>
    <name type="scientific">Bradyrhizobium sp. (strain BTAi1 / ATCC BAA-1182)</name>
    <dbReference type="NCBI Taxonomy" id="288000"/>
    <lineage>
        <taxon>Bacteria</taxon>
        <taxon>Pseudomonadati</taxon>
        <taxon>Pseudomonadota</taxon>
        <taxon>Alphaproteobacteria</taxon>
        <taxon>Hyphomicrobiales</taxon>
        <taxon>Nitrobacteraceae</taxon>
        <taxon>Bradyrhizobium</taxon>
    </lineage>
</organism>
<feature type="chain" id="PRO_1000010691" description="Elongation factor P">
    <location>
        <begin position="1"/>
        <end position="188"/>
    </location>
</feature>